<comment type="function">
    <text evidence="1">Catalyzes the anti-1,4-elimination of the C-3 phosphate and the C-6 proR hydrogen from 5-enolpyruvylshikimate-3-phosphate (EPSP) to yield chorismate, which is the branch point compound that serves as the starting substrate for the three terminal pathways of aromatic amino acid biosynthesis. This reaction introduces a second double bond into the aromatic ring system.</text>
</comment>
<comment type="catalytic activity">
    <reaction evidence="1">
        <text>5-O-(1-carboxyvinyl)-3-phosphoshikimate = chorismate + phosphate</text>
        <dbReference type="Rhea" id="RHEA:21020"/>
        <dbReference type="ChEBI" id="CHEBI:29748"/>
        <dbReference type="ChEBI" id="CHEBI:43474"/>
        <dbReference type="ChEBI" id="CHEBI:57701"/>
        <dbReference type="EC" id="4.2.3.5"/>
    </reaction>
</comment>
<comment type="cofactor">
    <cofactor evidence="1">
        <name>FMNH2</name>
        <dbReference type="ChEBI" id="CHEBI:57618"/>
    </cofactor>
    <text evidence="1">Reduced FMN (FMNH(2)).</text>
</comment>
<comment type="pathway">
    <text evidence="1">Metabolic intermediate biosynthesis; chorismate biosynthesis; chorismate from D-erythrose 4-phosphate and phosphoenolpyruvate: step 7/7.</text>
</comment>
<comment type="subunit">
    <text evidence="1">Homotetramer.</text>
</comment>
<comment type="similarity">
    <text evidence="1">Belongs to the chorismate synthase family.</text>
</comment>
<name>AROC_CHLL3</name>
<keyword id="KW-0028">Amino-acid biosynthesis</keyword>
<keyword id="KW-0057">Aromatic amino acid biosynthesis</keyword>
<keyword id="KW-0274">FAD</keyword>
<keyword id="KW-0285">Flavoprotein</keyword>
<keyword id="KW-0288">FMN</keyword>
<keyword id="KW-0456">Lyase</keyword>
<keyword id="KW-0521">NADP</keyword>
<keyword id="KW-1185">Reference proteome</keyword>
<sequence>MIRYFTAGESHGPALSAIIDGIPAGVAITKEDIDRELRRRQQGYGRGGRMKIEQDSAEVLSGIRFGKTIGSPIALVIRNRDWENWTDKMAQFSSNEETTEKISIPRPGHADLAGRLKYGFNDIRPVIDRSSARETAARVAAGSLARTFLRQLGIEIGSRVASIGSAEDTGSEGPLRSLLEHGAETLSEAADRSEVRMIGEAAGIEAMASIDRAKEQGDTLGGVIEIFITGVPVGLGSYVQHDRRLDSQLAAAVMAVQAIKGVEIGPAFDNARKPGSEVHDAFTLMKGEGVRRPTNRSGGLEGSMSSGEVIHIRAAMKPISSLQSPLQSFNLDTLEPVLSRFERSDTCAVPAAGVVIEAVVAPVIANALLEKLGGDHMDEIRERLERYREALRSAFTG</sequence>
<reference key="1">
    <citation type="submission" date="2005-08" db="EMBL/GenBank/DDBJ databases">
        <title>Complete sequence of Pelodictyon luteolum DSM 273.</title>
        <authorList>
            <consortium name="US DOE Joint Genome Institute"/>
            <person name="Copeland A."/>
            <person name="Lucas S."/>
            <person name="Lapidus A."/>
            <person name="Barry K."/>
            <person name="Detter J.C."/>
            <person name="Glavina T."/>
            <person name="Hammon N."/>
            <person name="Israni S."/>
            <person name="Pitluck S."/>
            <person name="Bryant D."/>
            <person name="Schmutz J."/>
            <person name="Larimer F."/>
            <person name="Land M."/>
            <person name="Kyrpides N."/>
            <person name="Ivanova N."/>
            <person name="Richardson P."/>
        </authorList>
    </citation>
    <scope>NUCLEOTIDE SEQUENCE [LARGE SCALE GENOMIC DNA]</scope>
    <source>
        <strain>DSM 273 / BCRC 81028 / 2530</strain>
    </source>
</reference>
<gene>
    <name evidence="1" type="primary">aroC</name>
    <name type="ordered locus">Plut_1436</name>
</gene>
<proteinExistence type="inferred from homology"/>
<evidence type="ECO:0000255" key="1">
    <source>
        <dbReference type="HAMAP-Rule" id="MF_00300"/>
    </source>
</evidence>
<organism>
    <name type="scientific">Chlorobium luteolum (strain DSM 273 / BCRC 81028 / 2530)</name>
    <name type="common">Pelodictyon luteolum</name>
    <dbReference type="NCBI Taxonomy" id="319225"/>
    <lineage>
        <taxon>Bacteria</taxon>
        <taxon>Pseudomonadati</taxon>
        <taxon>Chlorobiota</taxon>
        <taxon>Chlorobiia</taxon>
        <taxon>Chlorobiales</taxon>
        <taxon>Chlorobiaceae</taxon>
        <taxon>Chlorobium/Pelodictyon group</taxon>
        <taxon>Pelodictyon</taxon>
    </lineage>
</organism>
<feature type="chain" id="PRO_0000256310" description="Chorismate synthase">
    <location>
        <begin position="1"/>
        <end position="397"/>
    </location>
</feature>
<feature type="binding site" evidence="1">
    <location>
        <position position="40"/>
    </location>
    <ligand>
        <name>NADP(+)</name>
        <dbReference type="ChEBI" id="CHEBI:58349"/>
    </ligand>
</feature>
<feature type="binding site" evidence="1">
    <location>
        <position position="46"/>
    </location>
    <ligand>
        <name>NADP(+)</name>
        <dbReference type="ChEBI" id="CHEBI:58349"/>
    </ligand>
</feature>
<feature type="binding site" evidence="1">
    <location>
        <begin position="129"/>
        <end position="131"/>
    </location>
    <ligand>
        <name>FMN</name>
        <dbReference type="ChEBI" id="CHEBI:58210"/>
    </ligand>
</feature>
<feature type="binding site" evidence="1">
    <location>
        <begin position="257"/>
        <end position="258"/>
    </location>
    <ligand>
        <name>FMN</name>
        <dbReference type="ChEBI" id="CHEBI:58210"/>
    </ligand>
</feature>
<feature type="binding site" evidence="1">
    <location>
        <position position="302"/>
    </location>
    <ligand>
        <name>FMN</name>
        <dbReference type="ChEBI" id="CHEBI:58210"/>
    </ligand>
</feature>
<feature type="binding site" evidence="1">
    <location>
        <begin position="317"/>
        <end position="321"/>
    </location>
    <ligand>
        <name>FMN</name>
        <dbReference type="ChEBI" id="CHEBI:58210"/>
    </ligand>
</feature>
<feature type="binding site" evidence="1">
    <location>
        <position position="343"/>
    </location>
    <ligand>
        <name>FMN</name>
        <dbReference type="ChEBI" id="CHEBI:58210"/>
    </ligand>
</feature>
<protein>
    <recommendedName>
        <fullName evidence="1">Chorismate synthase</fullName>
        <shortName evidence="1">CS</shortName>
        <ecNumber evidence="1">4.2.3.5</ecNumber>
    </recommendedName>
    <alternativeName>
        <fullName evidence="1">5-enolpyruvylshikimate-3-phosphate phospholyase</fullName>
    </alternativeName>
</protein>
<dbReference type="EC" id="4.2.3.5" evidence="1"/>
<dbReference type="EMBL" id="CP000096">
    <property type="protein sequence ID" value="ABB24295.1"/>
    <property type="molecule type" value="Genomic_DNA"/>
</dbReference>
<dbReference type="RefSeq" id="WP_011358167.1">
    <property type="nucleotide sequence ID" value="NC_007512.1"/>
</dbReference>
<dbReference type="SMR" id="Q3B2Y6"/>
<dbReference type="STRING" id="319225.Plut_1436"/>
<dbReference type="KEGG" id="plt:Plut_1436"/>
<dbReference type="eggNOG" id="COG0082">
    <property type="taxonomic scope" value="Bacteria"/>
</dbReference>
<dbReference type="HOGENOM" id="CLU_034547_2_0_10"/>
<dbReference type="OrthoDB" id="9771806at2"/>
<dbReference type="UniPathway" id="UPA00053">
    <property type="reaction ID" value="UER00090"/>
</dbReference>
<dbReference type="Proteomes" id="UP000002709">
    <property type="component" value="Chromosome"/>
</dbReference>
<dbReference type="GO" id="GO:0005829">
    <property type="term" value="C:cytosol"/>
    <property type="evidence" value="ECO:0007669"/>
    <property type="project" value="TreeGrafter"/>
</dbReference>
<dbReference type="GO" id="GO:0004107">
    <property type="term" value="F:chorismate synthase activity"/>
    <property type="evidence" value="ECO:0007669"/>
    <property type="project" value="UniProtKB-UniRule"/>
</dbReference>
<dbReference type="GO" id="GO:0010181">
    <property type="term" value="F:FMN binding"/>
    <property type="evidence" value="ECO:0007669"/>
    <property type="project" value="TreeGrafter"/>
</dbReference>
<dbReference type="GO" id="GO:0008652">
    <property type="term" value="P:amino acid biosynthetic process"/>
    <property type="evidence" value="ECO:0007669"/>
    <property type="project" value="UniProtKB-KW"/>
</dbReference>
<dbReference type="GO" id="GO:0009073">
    <property type="term" value="P:aromatic amino acid family biosynthetic process"/>
    <property type="evidence" value="ECO:0007669"/>
    <property type="project" value="UniProtKB-KW"/>
</dbReference>
<dbReference type="GO" id="GO:0009423">
    <property type="term" value="P:chorismate biosynthetic process"/>
    <property type="evidence" value="ECO:0007669"/>
    <property type="project" value="UniProtKB-UniRule"/>
</dbReference>
<dbReference type="CDD" id="cd07304">
    <property type="entry name" value="Chorismate_synthase"/>
    <property type="match status" value="1"/>
</dbReference>
<dbReference type="FunFam" id="3.60.150.10:FF:000002">
    <property type="entry name" value="Chorismate synthase"/>
    <property type="match status" value="1"/>
</dbReference>
<dbReference type="Gene3D" id="3.60.150.10">
    <property type="entry name" value="Chorismate synthase AroC"/>
    <property type="match status" value="1"/>
</dbReference>
<dbReference type="HAMAP" id="MF_00300">
    <property type="entry name" value="Chorismate_synth"/>
    <property type="match status" value="1"/>
</dbReference>
<dbReference type="InterPro" id="IPR000453">
    <property type="entry name" value="Chorismate_synth"/>
</dbReference>
<dbReference type="InterPro" id="IPR035904">
    <property type="entry name" value="Chorismate_synth_AroC_sf"/>
</dbReference>
<dbReference type="InterPro" id="IPR020541">
    <property type="entry name" value="Chorismate_synthase_CS"/>
</dbReference>
<dbReference type="NCBIfam" id="TIGR00033">
    <property type="entry name" value="aroC"/>
    <property type="match status" value="1"/>
</dbReference>
<dbReference type="NCBIfam" id="NF003793">
    <property type="entry name" value="PRK05382.1"/>
    <property type="match status" value="1"/>
</dbReference>
<dbReference type="PANTHER" id="PTHR21085">
    <property type="entry name" value="CHORISMATE SYNTHASE"/>
    <property type="match status" value="1"/>
</dbReference>
<dbReference type="PANTHER" id="PTHR21085:SF0">
    <property type="entry name" value="CHORISMATE SYNTHASE"/>
    <property type="match status" value="1"/>
</dbReference>
<dbReference type="Pfam" id="PF01264">
    <property type="entry name" value="Chorismate_synt"/>
    <property type="match status" value="1"/>
</dbReference>
<dbReference type="PIRSF" id="PIRSF001456">
    <property type="entry name" value="Chorismate_synth"/>
    <property type="match status" value="1"/>
</dbReference>
<dbReference type="SUPFAM" id="SSF103263">
    <property type="entry name" value="Chorismate synthase, AroC"/>
    <property type="match status" value="1"/>
</dbReference>
<dbReference type="PROSITE" id="PS00787">
    <property type="entry name" value="CHORISMATE_SYNTHASE_1"/>
    <property type="match status" value="1"/>
</dbReference>
<accession>Q3B2Y6</accession>